<proteinExistence type="evidence at transcript level"/>
<reference key="1">
    <citation type="journal article" date="2008" name="PLoS Genet.">
        <title>Genomic islands in the pathogenic filamentous fungus Aspergillus fumigatus.</title>
        <authorList>
            <person name="Fedorova N.D."/>
            <person name="Khaldi N."/>
            <person name="Joardar V.S."/>
            <person name="Maiti R."/>
            <person name="Amedeo P."/>
            <person name="Anderson M.J."/>
            <person name="Crabtree J."/>
            <person name="Silva J.C."/>
            <person name="Badger J.H."/>
            <person name="Albarraq A."/>
            <person name="Angiuoli S."/>
            <person name="Bussey H."/>
            <person name="Bowyer P."/>
            <person name="Cotty P.J."/>
            <person name="Dyer P.S."/>
            <person name="Egan A."/>
            <person name="Galens K."/>
            <person name="Fraser-Liggett C.M."/>
            <person name="Haas B.J."/>
            <person name="Inman J.M."/>
            <person name="Kent R."/>
            <person name="Lemieux S."/>
            <person name="Malavazi I."/>
            <person name="Orvis J."/>
            <person name="Roemer T."/>
            <person name="Ronning C.M."/>
            <person name="Sundaram J.P."/>
            <person name="Sutton G."/>
            <person name="Turner G."/>
            <person name="Venter J.C."/>
            <person name="White O.R."/>
            <person name="Whitty B.R."/>
            <person name="Youngman P."/>
            <person name="Wolfe K.H."/>
            <person name="Goldman G.H."/>
            <person name="Wortman J.R."/>
            <person name="Jiang B."/>
            <person name="Denning D.W."/>
            <person name="Nierman W.C."/>
        </authorList>
    </citation>
    <scope>NUCLEOTIDE SEQUENCE [LARGE SCALE GENOMIC DNA]</scope>
    <source>
        <strain>CBS 144.89 / FGSC A1163 / CEA10</strain>
    </source>
</reference>
<sequence>MTSQGPLYIGFDLSTQQLKGLVVNSELKVVHISKFDFDADSHGFSIKKGVLTNEAEHEVFAPVALWLQALDGVLNGLRKQGLDFSRVKGISGAGQQHGSVYWGENAESLLKSLDSSKSLEEQLSGAFSHPFSPNWQDASTQKECDEFDAFLGGPEQLAEATGSKAHHRFTGPQILRMQRKYPEVYKKTARISLVSSFLASLLLGHIAPMDISDVCGMNLWDIKKGAYNEKLLGLCAGPFGVEDLKRKLGAVPEDGGLRLGKINRYFVERYGFSSDCEILPSTGDNPATILALPLRPSDAMVSLGTSTTFLMSTPNYKPDPATHFFNHPTTPGLYMFMLCYKNGGLAREHVRDAINEKSGSGASQSWESFDKIMLETPPMGQKTESGPMKMGLFFPRPEIVPNVRSGQWRFTYDPASDALTETEDGWNTPSDEARAIVESQMLSLRLRSRGLTQSPGDGLPPQPRRVYLVGGGSKNKAIAKVAGEILGGSDGVYKLDVGDNACALGAAYKAVWAIERKPGQTFEDLIGQRWREEEFIEKIADGYQKGVFEKYGKAVEGFEKMEQQVLKQEAARK</sequence>
<protein>
    <recommendedName>
        <fullName>Probable D-xylulose kinase A</fullName>
        <shortName>Xylulokinase A</shortName>
        <ecNumber>2.7.1.17</ecNumber>
    </recommendedName>
</protein>
<accession>B0Y4D5</accession>
<organism>
    <name type="scientific">Aspergillus fumigatus (strain CBS 144.89 / FGSC A1163 / CEA10)</name>
    <name type="common">Neosartorya fumigata</name>
    <dbReference type="NCBI Taxonomy" id="451804"/>
    <lineage>
        <taxon>Eukaryota</taxon>
        <taxon>Fungi</taxon>
        <taxon>Dikarya</taxon>
        <taxon>Ascomycota</taxon>
        <taxon>Pezizomycotina</taxon>
        <taxon>Eurotiomycetes</taxon>
        <taxon>Eurotiomycetidae</taxon>
        <taxon>Eurotiales</taxon>
        <taxon>Aspergillaceae</taxon>
        <taxon>Aspergillus</taxon>
        <taxon>Aspergillus subgen. Fumigati</taxon>
    </lineage>
</organism>
<feature type="chain" id="PRO_0000393517" description="Probable D-xylulose kinase A">
    <location>
        <begin position="1"/>
        <end position="573"/>
    </location>
</feature>
<feature type="binding site" evidence="1">
    <location>
        <position position="97"/>
    </location>
    <ligand>
        <name>substrate</name>
    </ligand>
</feature>
<feature type="binding site" evidence="1">
    <location>
        <position position="168"/>
    </location>
    <ligand>
        <name>substrate</name>
    </ligand>
</feature>
<feature type="binding site" evidence="1">
    <location>
        <position position="284"/>
    </location>
    <ligand>
        <name>substrate</name>
    </ligand>
</feature>
<feature type="binding site" evidence="1">
    <location>
        <position position="285"/>
    </location>
    <ligand>
        <name>substrate</name>
    </ligand>
</feature>
<feature type="binding site" evidence="1">
    <location>
        <position position="366"/>
    </location>
    <ligand>
        <name>ATP</name>
        <dbReference type="ChEBI" id="CHEBI:30616"/>
    </ligand>
</feature>
<feature type="binding site" evidence="1">
    <location>
        <begin position="471"/>
        <end position="472"/>
    </location>
    <ligand>
        <name>ATP</name>
        <dbReference type="ChEBI" id="CHEBI:30616"/>
    </ligand>
</feature>
<feature type="binding site" evidence="1">
    <location>
        <position position="475"/>
    </location>
    <ligand>
        <name>ATP</name>
        <dbReference type="ChEBI" id="CHEBI:30616"/>
    </ligand>
</feature>
<name>XKS1_ASPFC</name>
<evidence type="ECO:0000250" key="1"/>
<evidence type="ECO:0000305" key="2"/>
<gene>
    <name type="primary">xkiA</name>
    <name type="ORF">AFUB_057400</name>
</gene>
<keyword id="KW-0067">ATP-binding</keyword>
<keyword id="KW-0119">Carbohydrate metabolism</keyword>
<keyword id="KW-0963">Cytoplasm</keyword>
<keyword id="KW-0418">Kinase</keyword>
<keyword id="KW-0547">Nucleotide-binding</keyword>
<keyword id="KW-0808">Transferase</keyword>
<keyword id="KW-0859">Xylose metabolism</keyword>
<comment type="function">
    <text evidence="1">Highly specific D-xylulose kinase which participates in the catabolism of xylose. Xylose is a major component of hemicelluloses such as xylan. Most fungi utilize D-xylose via three enzymatic reactions, xylose reductase (XR), xylitol dehydrogenase (XDH), and xylulokinase, to form xylulose 5-phosphate, which enters pentose phosphate pathway (By similarity).</text>
</comment>
<comment type="catalytic activity">
    <reaction>
        <text>D-xylulose + ATP = D-xylulose 5-phosphate + ADP + H(+)</text>
        <dbReference type="Rhea" id="RHEA:10964"/>
        <dbReference type="ChEBI" id="CHEBI:15378"/>
        <dbReference type="ChEBI" id="CHEBI:17140"/>
        <dbReference type="ChEBI" id="CHEBI:30616"/>
        <dbReference type="ChEBI" id="CHEBI:57737"/>
        <dbReference type="ChEBI" id="CHEBI:456216"/>
        <dbReference type="EC" id="2.7.1.17"/>
    </reaction>
</comment>
<comment type="subcellular location">
    <subcellularLocation>
        <location evidence="1">Cytoplasm</location>
    </subcellularLocation>
</comment>
<comment type="induction">
    <text>By D-xylose, L-arabinose or L-arabitol.</text>
</comment>
<comment type="similarity">
    <text evidence="2">Belongs to the FGGY kinase family.</text>
</comment>
<dbReference type="EC" id="2.7.1.17"/>
<dbReference type="EMBL" id="DS499597">
    <property type="protein sequence ID" value="EDP51726.1"/>
    <property type="molecule type" value="Genomic_DNA"/>
</dbReference>
<dbReference type="SMR" id="B0Y4D5"/>
<dbReference type="EnsemblFungi" id="EDP51726">
    <property type="protein sequence ID" value="EDP51726"/>
    <property type="gene ID" value="AFUB_057400"/>
</dbReference>
<dbReference type="VEuPathDB" id="FungiDB:AFUB_057400"/>
<dbReference type="HOGENOM" id="CLU_016149_5_0_1"/>
<dbReference type="OrthoDB" id="27970at5052"/>
<dbReference type="PhylomeDB" id="B0Y4D5"/>
<dbReference type="Proteomes" id="UP000001699">
    <property type="component" value="Unassembled WGS sequence"/>
</dbReference>
<dbReference type="GO" id="GO:0005829">
    <property type="term" value="C:cytosol"/>
    <property type="evidence" value="ECO:0007669"/>
    <property type="project" value="TreeGrafter"/>
</dbReference>
<dbReference type="GO" id="GO:0005524">
    <property type="term" value="F:ATP binding"/>
    <property type="evidence" value="ECO:0007669"/>
    <property type="project" value="UniProtKB-KW"/>
</dbReference>
<dbReference type="GO" id="GO:0004856">
    <property type="term" value="F:D-xylulokinase activity"/>
    <property type="evidence" value="ECO:0007669"/>
    <property type="project" value="UniProtKB-EC"/>
</dbReference>
<dbReference type="GO" id="GO:0042732">
    <property type="term" value="P:D-xylose metabolic process"/>
    <property type="evidence" value="ECO:0007669"/>
    <property type="project" value="UniProtKB-KW"/>
</dbReference>
<dbReference type="GO" id="GO:0005997">
    <property type="term" value="P:xylulose metabolic process"/>
    <property type="evidence" value="ECO:0007669"/>
    <property type="project" value="TreeGrafter"/>
</dbReference>
<dbReference type="CDD" id="cd07776">
    <property type="entry name" value="ASKHA_NBD_FGGY_SpXK-like"/>
    <property type="match status" value="1"/>
</dbReference>
<dbReference type="FunFam" id="3.30.420.40:FF:000118">
    <property type="entry name" value="Xylulose kinase 2"/>
    <property type="match status" value="1"/>
</dbReference>
<dbReference type="Gene3D" id="3.30.420.40">
    <property type="match status" value="2"/>
</dbReference>
<dbReference type="InterPro" id="IPR043129">
    <property type="entry name" value="ATPase_NBD"/>
</dbReference>
<dbReference type="InterPro" id="IPR042024">
    <property type="entry name" value="D-XK_euk"/>
</dbReference>
<dbReference type="InterPro" id="IPR018485">
    <property type="entry name" value="FGGY_C"/>
</dbReference>
<dbReference type="InterPro" id="IPR018484">
    <property type="entry name" value="FGGY_N"/>
</dbReference>
<dbReference type="PANTHER" id="PTHR10196">
    <property type="entry name" value="SUGAR KINASE"/>
    <property type="match status" value="1"/>
</dbReference>
<dbReference type="PANTHER" id="PTHR10196:SF57">
    <property type="entry name" value="XYLULOSE KINASE"/>
    <property type="match status" value="1"/>
</dbReference>
<dbReference type="Pfam" id="PF02782">
    <property type="entry name" value="FGGY_C"/>
    <property type="match status" value="1"/>
</dbReference>
<dbReference type="Pfam" id="PF00370">
    <property type="entry name" value="FGGY_N"/>
    <property type="match status" value="1"/>
</dbReference>
<dbReference type="SUPFAM" id="SSF53067">
    <property type="entry name" value="Actin-like ATPase domain"/>
    <property type="match status" value="2"/>
</dbReference>